<dbReference type="EMBL" id="AM747720">
    <property type="protein sequence ID" value="CAR50330.1"/>
    <property type="molecule type" value="Genomic_DNA"/>
</dbReference>
<dbReference type="RefSeq" id="WP_006482726.1">
    <property type="nucleotide sequence ID" value="NC_011000.1"/>
</dbReference>
<dbReference type="SMR" id="B4E581"/>
<dbReference type="KEGG" id="bcj:BCAL0024"/>
<dbReference type="eggNOG" id="COG0445">
    <property type="taxonomic scope" value="Bacteria"/>
</dbReference>
<dbReference type="HOGENOM" id="CLU_007831_2_2_4"/>
<dbReference type="BioCyc" id="BCEN216591:G1G1V-26-MONOMER"/>
<dbReference type="Proteomes" id="UP000001035">
    <property type="component" value="Chromosome 1"/>
</dbReference>
<dbReference type="GO" id="GO:0005829">
    <property type="term" value="C:cytosol"/>
    <property type="evidence" value="ECO:0007669"/>
    <property type="project" value="TreeGrafter"/>
</dbReference>
<dbReference type="GO" id="GO:0050660">
    <property type="term" value="F:flavin adenine dinucleotide binding"/>
    <property type="evidence" value="ECO:0007669"/>
    <property type="project" value="UniProtKB-UniRule"/>
</dbReference>
<dbReference type="GO" id="GO:0030488">
    <property type="term" value="P:tRNA methylation"/>
    <property type="evidence" value="ECO:0007669"/>
    <property type="project" value="TreeGrafter"/>
</dbReference>
<dbReference type="GO" id="GO:0002098">
    <property type="term" value="P:tRNA wobble uridine modification"/>
    <property type="evidence" value="ECO:0007669"/>
    <property type="project" value="InterPro"/>
</dbReference>
<dbReference type="FunFam" id="1.10.10.1800:FF:000001">
    <property type="entry name" value="tRNA uridine 5-carboxymethylaminomethyl modification enzyme MnmG"/>
    <property type="match status" value="1"/>
</dbReference>
<dbReference type="FunFam" id="1.10.150.570:FF:000001">
    <property type="entry name" value="tRNA uridine 5-carboxymethylaminomethyl modification enzyme MnmG"/>
    <property type="match status" value="1"/>
</dbReference>
<dbReference type="FunFam" id="3.50.50.60:FF:000002">
    <property type="entry name" value="tRNA uridine 5-carboxymethylaminomethyl modification enzyme MnmG"/>
    <property type="match status" value="1"/>
</dbReference>
<dbReference type="FunFam" id="3.50.50.60:FF:000010">
    <property type="entry name" value="tRNA uridine 5-carboxymethylaminomethyl modification enzyme MnmG"/>
    <property type="match status" value="1"/>
</dbReference>
<dbReference type="Gene3D" id="3.50.50.60">
    <property type="entry name" value="FAD/NAD(P)-binding domain"/>
    <property type="match status" value="2"/>
</dbReference>
<dbReference type="Gene3D" id="1.10.150.570">
    <property type="entry name" value="GidA associated domain, C-terminal subdomain"/>
    <property type="match status" value="1"/>
</dbReference>
<dbReference type="Gene3D" id="1.10.10.1800">
    <property type="entry name" value="tRNA uridine 5-carboxymethylaminomethyl modification enzyme MnmG/GidA"/>
    <property type="match status" value="1"/>
</dbReference>
<dbReference type="HAMAP" id="MF_00129">
    <property type="entry name" value="MnmG_GidA"/>
    <property type="match status" value="1"/>
</dbReference>
<dbReference type="InterPro" id="IPR036188">
    <property type="entry name" value="FAD/NAD-bd_sf"/>
</dbReference>
<dbReference type="InterPro" id="IPR049312">
    <property type="entry name" value="GIDA_C_N"/>
</dbReference>
<dbReference type="InterPro" id="IPR004416">
    <property type="entry name" value="MnmG"/>
</dbReference>
<dbReference type="InterPro" id="IPR002218">
    <property type="entry name" value="MnmG-rel"/>
</dbReference>
<dbReference type="InterPro" id="IPR020595">
    <property type="entry name" value="MnmG-rel_CS"/>
</dbReference>
<dbReference type="InterPro" id="IPR026904">
    <property type="entry name" value="MnmG_C"/>
</dbReference>
<dbReference type="InterPro" id="IPR047001">
    <property type="entry name" value="MnmG_C_subdom"/>
</dbReference>
<dbReference type="InterPro" id="IPR044920">
    <property type="entry name" value="MnmG_C_subdom_sf"/>
</dbReference>
<dbReference type="InterPro" id="IPR040131">
    <property type="entry name" value="MnmG_N"/>
</dbReference>
<dbReference type="NCBIfam" id="TIGR00136">
    <property type="entry name" value="mnmG_gidA"/>
    <property type="match status" value="1"/>
</dbReference>
<dbReference type="PANTHER" id="PTHR11806">
    <property type="entry name" value="GLUCOSE INHIBITED DIVISION PROTEIN A"/>
    <property type="match status" value="1"/>
</dbReference>
<dbReference type="PANTHER" id="PTHR11806:SF0">
    <property type="entry name" value="PROTEIN MTO1 HOMOLOG, MITOCHONDRIAL"/>
    <property type="match status" value="1"/>
</dbReference>
<dbReference type="Pfam" id="PF01134">
    <property type="entry name" value="GIDA"/>
    <property type="match status" value="1"/>
</dbReference>
<dbReference type="Pfam" id="PF21680">
    <property type="entry name" value="GIDA_C_1st"/>
    <property type="match status" value="1"/>
</dbReference>
<dbReference type="Pfam" id="PF13932">
    <property type="entry name" value="SAM_GIDA_C"/>
    <property type="match status" value="1"/>
</dbReference>
<dbReference type="SMART" id="SM01228">
    <property type="entry name" value="GIDA_assoc_3"/>
    <property type="match status" value="1"/>
</dbReference>
<dbReference type="SUPFAM" id="SSF51905">
    <property type="entry name" value="FAD/NAD(P)-binding domain"/>
    <property type="match status" value="1"/>
</dbReference>
<dbReference type="PROSITE" id="PS01280">
    <property type="entry name" value="GIDA_1"/>
    <property type="match status" value="1"/>
</dbReference>
<dbReference type="PROSITE" id="PS01281">
    <property type="entry name" value="GIDA_2"/>
    <property type="match status" value="1"/>
</dbReference>
<protein>
    <recommendedName>
        <fullName evidence="1">tRNA uridine 5-carboxymethylaminomethyl modification enzyme MnmG</fullName>
    </recommendedName>
    <alternativeName>
        <fullName evidence="1">Glucose-inhibited division protein A</fullName>
    </alternativeName>
</protein>
<gene>
    <name evidence="1" type="primary">mnmG</name>
    <name evidence="1" type="synonym">gidA</name>
    <name type="ordered locus">BceJ2315_00240</name>
    <name type="ORF">BCAL0024</name>
</gene>
<sequence length="656" mass="71906">MLFPTEFDVIVVGGGHAGTEAALASARMGAKTLLLTHNIETLGQMSCNPSIGGIGKGHLVKEVDALGGAMAAATDESGIQFRILNSSKGPAVRATRAQADRILYKAAIRHRLENQPNLWLFQQAVDDLMVEGDRVVGAVTQIGIRFRARAVVLTAGTFLDGKIHVGLNNYTGGRAGDPAAVSLSSRLKELKLPQGRLKTGTPPRIDGRTIDFSKLDEQPGDLDPIPVFSFLGRAEQHPQQLPCWVTHTNERTHDIIRGGLDRSPMYTGVIEGVGPRYCPSIEDKIHRFASKESHQIFLEPEGLTTNEFYPNGISTSLPFDVQLELVHSMRGLENAHILRPGYAIEYDYFDPRALKASLETKAINGLFFAGQINGTTGYEEAAAQGLLAGLNAGRYVQEKEAWCPRRDQAYLGVLVDDLVTRGVAEPYRMFTSRAEYRLSLREDNADMRLTEIGRELGLVDDARWDAFSRKRDAVSRETERLKSTWVTPKTLPAEEATALLGKAIDHEYSLAELLRRPGVSYDGVCGLKGGECGPAEPLTDDPVLLEQIKEQVEIGIKYQGYIERQASEIERNDANENTRLPDGIDYREVRGLSFEVSQKLNEFRPETIGQASRISGVTPAAISLLMVHLKRRGLGRRNGTAAEAAEQGGGTVPTQQ</sequence>
<accession>B4E581</accession>
<organism>
    <name type="scientific">Burkholderia cenocepacia (strain ATCC BAA-245 / DSM 16553 / LMG 16656 / NCTC 13227 / J2315 / CF5610)</name>
    <name type="common">Burkholderia cepacia (strain J2315)</name>
    <dbReference type="NCBI Taxonomy" id="216591"/>
    <lineage>
        <taxon>Bacteria</taxon>
        <taxon>Pseudomonadati</taxon>
        <taxon>Pseudomonadota</taxon>
        <taxon>Betaproteobacteria</taxon>
        <taxon>Burkholderiales</taxon>
        <taxon>Burkholderiaceae</taxon>
        <taxon>Burkholderia</taxon>
        <taxon>Burkholderia cepacia complex</taxon>
    </lineage>
</organism>
<proteinExistence type="inferred from homology"/>
<feature type="chain" id="PRO_1000095644" description="tRNA uridine 5-carboxymethylaminomethyl modification enzyme MnmG">
    <location>
        <begin position="1"/>
        <end position="656"/>
    </location>
</feature>
<feature type="region of interest" description="Disordered" evidence="2">
    <location>
        <begin position="637"/>
        <end position="656"/>
    </location>
</feature>
<feature type="compositionally biased region" description="Gly residues" evidence="2">
    <location>
        <begin position="647"/>
        <end position="656"/>
    </location>
</feature>
<feature type="binding site" evidence="1">
    <location>
        <begin position="13"/>
        <end position="18"/>
    </location>
    <ligand>
        <name>FAD</name>
        <dbReference type="ChEBI" id="CHEBI:57692"/>
    </ligand>
</feature>
<feature type="binding site" evidence="1">
    <location>
        <begin position="274"/>
        <end position="288"/>
    </location>
    <ligand>
        <name>NAD(+)</name>
        <dbReference type="ChEBI" id="CHEBI:57540"/>
    </ligand>
</feature>
<keyword id="KW-0963">Cytoplasm</keyword>
<keyword id="KW-0274">FAD</keyword>
<keyword id="KW-0285">Flavoprotein</keyword>
<keyword id="KW-0520">NAD</keyword>
<keyword id="KW-0819">tRNA processing</keyword>
<reference key="1">
    <citation type="journal article" date="2009" name="J. Bacteriol.">
        <title>The genome of Burkholderia cenocepacia J2315, an epidemic pathogen of cystic fibrosis patients.</title>
        <authorList>
            <person name="Holden M.T."/>
            <person name="Seth-Smith H.M."/>
            <person name="Crossman L.C."/>
            <person name="Sebaihia M."/>
            <person name="Bentley S.D."/>
            <person name="Cerdeno-Tarraga A.M."/>
            <person name="Thomson N.R."/>
            <person name="Bason N."/>
            <person name="Quail M.A."/>
            <person name="Sharp S."/>
            <person name="Cherevach I."/>
            <person name="Churcher C."/>
            <person name="Goodhead I."/>
            <person name="Hauser H."/>
            <person name="Holroyd N."/>
            <person name="Mungall K."/>
            <person name="Scott P."/>
            <person name="Walker D."/>
            <person name="White B."/>
            <person name="Rose H."/>
            <person name="Iversen P."/>
            <person name="Mil-Homens D."/>
            <person name="Rocha E.P."/>
            <person name="Fialho A.M."/>
            <person name="Baldwin A."/>
            <person name="Dowson C."/>
            <person name="Barrell B.G."/>
            <person name="Govan J.R."/>
            <person name="Vandamme P."/>
            <person name="Hart C.A."/>
            <person name="Mahenthiralingam E."/>
            <person name="Parkhill J."/>
        </authorList>
    </citation>
    <scope>NUCLEOTIDE SEQUENCE [LARGE SCALE GENOMIC DNA]</scope>
    <source>
        <strain>ATCC BAA-245 / DSM 16553 / LMG 16656 / NCTC 13227 / J2315 / CF5610</strain>
    </source>
</reference>
<name>MNMG_BURCJ</name>
<evidence type="ECO:0000255" key="1">
    <source>
        <dbReference type="HAMAP-Rule" id="MF_00129"/>
    </source>
</evidence>
<evidence type="ECO:0000256" key="2">
    <source>
        <dbReference type="SAM" id="MobiDB-lite"/>
    </source>
</evidence>
<comment type="function">
    <text evidence="1">NAD-binding protein involved in the addition of a carboxymethylaminomethyl (cmnm) group at the wobble position (U34) of certain tRNAs, forming tRNA-cmnm(5)s(2)U34.</text>
</comment>
<comment type="cofactor">
    <cofactor evidence="1">
        <name>FAD</name>
        <dbReference type="ChEBI" id="CHEBI:57692"/>
    </cofactor>
</comment>
<comment type="subunit">
    <text evidence="1">Homodimer. Heterotetramer of two MnmE and two MnmG subunits.</text>
</comment>
<comment type="subcellular location">
    <subcellularLocation>
        <location evidence="1">Cytoplasm</location>
    </subcellularLocation>
</comment>
<comment type="similarity">
    <text evidence="1">Belongs to the MnmG family.</text>
</comment>